<comment type="function">
    <text evidence="1">One of the primary rRNA binding proteins, it binds directly to 16S rRNA where it nucleates assembly of the body of the 30S subunit.</text>
</comment>
<comment type="function">
    <text evidence="1">With S5 and S12 plays an important role in translational accuracy.</text>
</comment>
<comment type="subunit">
    <text evidence="1">Part of the 30S ribosomal subunit. Contacts protein S5. The interaction surface between S4 and S5 is involved in control of translational fidelity (By similarity).</text>
</comment>
<comment type="subcellular location">
    <subcellularLocation>
        <location>Plastid</location>
        <location>Chloroplast</location>
    </subcellularLocation>
</comment>
<comment type="similarity">
    <text evidence="3">Belongs to the universal ribosomal protein uS4 family.</text>
</comment>
<geneLocation type="chloroplast"/>
<protein>
    <recommendedName>
        <fullName evidence="3">Small ribosomal subunit protein uS4c</fullName>
    </recommendedName>
    <alternativeName>
        <fullName>30S ribosomal protein S4, chloroplastic</fullName>
    </alternativeName>
</protein>
<proteinExistence type="inferred from homology"/>
<gene>
    <name type="primary">rps4</name>
    <name type="ordered locus">PS120</name>
</gene>
<keyword id="KW-0150">Chloroplast</keyword>
<keyword id="KW-0934">Plastid</keyword>
<keyword id="KW-0687">Ribonucleoprotein</keyword>
<keyword id="KW-0689">Ribosomal protein</keyword>
<keyword id="KW-0694">RNA-binding</keyword>
<keyword id="KW-0699">rRNA-binding</keyword>
<name>RR4_SACHY</name>
<organism>
    <name type="scientific">Saccharum hybrid</name>
    <name type="common">Sugarcane</name>
    <dbReference type="NCBI Taxonomy" id="15819"/>
    <lineage>
        <taxon>Eukaryota</taxon>
        <taxon>Viridiplantae</taxon>
        <taxon>Streptophyta</taxon>
        <taxon>Embryophyta</taxon>
        <taxon>Tracheophyta</taxon>
        <taxon>Spermatophyta</taxon>
        <taxon>Magnoliopsida</taxon>
        <taxon>Liliopsida</taxon>
        <taxon>Poales</taxon>
        <taxon>Poaceae</taxon>
        <taxon>PACMAD clade</taxon>
        <taxon>Panicoideae</taxon>
        <taxon>Andropogonodae</taxon>
        <taxon>Andropogoneae</taxon>
        <taxon>Saccharinae</taxon>
        <taxon>Saccharum</taxon>
    </lineage>
</organism>
<accession>Q6L397</accession>
<sequence>MSRYRGPRLKKIRRLGALPGLTRKTPKSGSNQKKKFHSGKKEQYRIRLQEKQKLRFHYGLTERQLLRYVHIAGKAKRSTGQVLLQLLEMRLDNILFRLGMASTIPGARQLVNHRHILVNGRIVDIPSFRCKPRDIITTKDNQRSKRLVQNYIASSDPGKLPKHLTVDTLQYKGLVKKILDRKWVGLKINELLVVEYYSRQT</sequence>
<feature type="chain" id="PRO_0000132662" description="Small ribosomal subunit protein uS4c">
    <location>
        <begin position="1"/>
        <end position="201"/>
    </location>
</feature>
<feature type="domain" description="S4 RNA-binding">
    <location>
        <begin position="89"/>
        <end position="150"/>
    </location>
</feature>
<feature type="region of interest" description="Disordered" evidence="2">
    <location>
        <begin position="15"/>
        <end position="43"/>
    </location>
</feature>
<evidence type="ECO:0000250" key="1"/>
<evidence type="ECO:0000256" key="2">
    <source>
        <dbReference type="SAM" id="MobiDB-lite"/>
    </source>
</evidence>
<evidence type="ECO:0000305" key="3"/>
<dbReference type="EMBL" id="AE009947">
    <property type="protein sequence ID" value="AAT44695.1"/>
    <property type="molecule type" value="Genomic_DNA"/>
</dbReference>
<dbReference type="SMR" id="Q6L397"/>
<dbReference type="GO" id="GO:0009507">
    <property type="term" value="C:chloroplast"/>
    <property type="evidence" value="ECO:0007669"/>
    <property type="project" value="UniProtKB-SubCell"/>
</dbReference>
<dbReference type="GO" id="GO:0015935">
    <property type="term" value="C:small ribosomal subunit"/>
    <property type="evidence" value="ECO:0007669"/>
    <property type="project" value="InterPro"/>
</dbReference>
<dbReference type="GO" id="GO:0019843">
    <property type="term" value="F:rRNA binding"/>
    <property type="evidence" value="ECO:0007669"/>
    <property type="project" value="UniProtKB-UniRule"/>
</dbReference>
<dbReference type="GO" id="GO:0003735">
    <property type="term" value="F:structural constituent of ribosome"/>
    <property type="evidence" value="ECO:0007669"/>
    <property type="project" value="InterPro"/>
</dbReference>
<dbReference type="GO" id="GO:0042274">
    <property type="term" value="P:ribosomal small subunit biogenesis"/>
    <property type="evidence" value="ECO:0007669"/>
    <property type="project" value="TreeGrafter"/>
</dbReference>
<dbReference type="GO" id="GO:0006412">
    <property type="term" value="P:translation"/>
    <property type="evidence" value="ECO:0007669"/>
    <property type="project" value="UniProtKB-UniRule"/>
</dbReference>
<dbReference type="CDD" id="cd00165">
    <property type="entry name" value="S4"/>
    <property type="match status" value="1"/>
</dbReference>
<dbReference type="FunFam" id="1.10.1050.10:FF:000002">
    <property type="entry name" value="30S ribosomal protein S4, chloroplastic"/>
    <property type="match status" value="1"/>
</dbReference>
<dbReference type="FunFam" id="3.10.290.10:FF:000081">
    <property type="entry name" value="30S ribosomal protein S4, chloroplastic"/>
    <property type="match status" value="1"/>
</dbReference>
<dbReference type="Gene3D" id="1.10.1050.10">
    <property type="entry name" value="Ribosomal Protein S4 Delta 41, Chain A, domain 1"/>
    <property type="match status" value="1"/>
</dbReference>
<dbReference type="Gene3D" id="3.10.290.10">
    <property type="entry name" value="RNA-binding S4 domain"/>
    <property type="match status" value="1"/>
</dbReference>
<dbReference type="HAMAP" id="MF_01306_B">
    <property type="entry name" value="Ribosomal_uS4_B"/>
    <property type="match status" value="1"/>
</dbReference>
<dbReference type="InterPro" id="IPR022801">
    <property type="entry name" value="Ribosomal_uS4"/>
</dbReference>
<dbReference type="InterPro" id="IPR005709">
    <property type="entry name" value="Ribosomal_uS4_bac-type"/>
</dbReference>
<dbReference type="InterPro" id="IPR018079">
    <property type="entry name" value="Ribosomal_uS4_CS"/>
</dbReference>
<dbReference type="InterPro" id="IPR001912">
    <property type="entry name" value="Ribosomal_uS4_N"/>
</dbReference>
<dbReference type="InterPro" id="IPR002942">
    <property type="entry name" value="S4_RNA-bd"/>
</dbReference>
<dbReference type="InterPro" id="IPR036986">
    <property type="entry name" value="S4_RNA-bd_sf"/>
</dbReference>
<dbReference type="NCBIfam" id="NF003717">
    <property type="entry name" value="PRK05327.1"/>
    <property type="match status" value="1"/>
</dbReference>
<dbReference type="NCBIfam" id="TIGR01017">
    <property type="entry name" value="rpsD_bact"/>
    <property type="match status" value="1"/>
</dbReference>
<dbReference type="PANTHER" id="PTHR11831">
    <property type="entry name" value="30S 40S RIBOSOMAL PROTEIN"/>
    <property type="match status" value="1"/>
</dbReference>
<dbReference type="PANTHER" id="PTHR11831:SF4">
    <property type="entry name" value="SMALL RIBOSOMAL SUBUNIT PROTEIN US4M"/>
    <property type="match status" value="1"/>
</dbReference>
<dbReference type="Pfam" id="PF00163">
    <property type="entry name" value="Ribosomal_S4"/>
    <property type="match status" value="1"/>
</dbReference>
<dbReference type="Pfam" id="PF01479">
    <property type="entry name" value="S4"/>
    <property type="match status" value="1"/>
</dbReference>
<dbReference type="SMART" id="SM01390">
    <property type="entry name" value="Ribosomal_S4"/>
    <property type="match status" value="1"/>
</dbReference>
<dbReference type="SMART" id="SM00363">
    <property type="entry name" value="S4"/>
    <property type="match status" value="1"/>
</dbReference>
<dbReference type="SUPFAM" id="SSF55174">
    <property type="entry name" value="Alpha-L RNA-binding motif"/>
    <property type="match status" value="1"/>
</dbReference>
<dbReference type="PROSITE" id="PS00632">
    <property type="entry name" value="RIBOSOMAL_S4"/>
    <property type="match status" value="1"/>
</dbReference>
<dbReference type="PROSITE" id="PS50889">
    <property type="entry name" value="S4"/>
    <property type="match status" value="1"/>
</dbReference>
<reference key="1">
    <citation type="journal article" date="2004" name="Curr. Genet.">
        <title>Structural features and transcript-editing analysis of sugarcane (Saccharum officinarum L.) chloroplast genome.</title>
        <authorList>
            <person name="Calsa T. Jr."/>
            <person name="Carraro D.M."/>
            <person name="Benatti M.R."/>
            <person name="Barbosa A.C."/>
            <person name="Kitajima J.P."/>
            <person name="Carrer H."/>
        </authorList>
    </citation>
    <scope>NUCLEOTIDE SEQUENCE [LARGE SCALE GENOMIC DNA]</scope>
    <source>
        <strain>cv. SP-80-3280</strain>
    </source>
</reference>